<protein>
    <recommendedName>
        <fullName evidence="1">Ribosomal RNA small subunit methyltransferase H</fullName>
        <ecNumber evidence="1">2.1.1.199</ecNumber>
    </recommendedName>
    <alternativeName>
        <fullName evidence="1">16S rRNA m(4)C1402 methyltransferase</fullName>
    </alternativeName>
    <alternativeName>
        <fullName evidence="1">rRNA (cytosine-N(4)-)-methyltransferase RsmH</fullName>
    </alternativeName>
</protein>
<sequence length="316" mass="34973">MAEAGKHTTVLLQEAVEALALKPDGIYVDGTFGRGGHSRLILERLGKNGRLIAFDRDPVACAVGRSFGDERFCMVHSSYSRLQEVLRQLNIGQIDGVLLDLGVSSPQLEEATRGFSFSMEGPLDMRMDTTEGQTAAQWLASASEVQLEEVIKEYGEERFAKQIARAIVKARARQPLVTTSQLAAIVAAAIPARAREPKQNPATRTFQAIRIYLNQELERLSLALPQCVEMLKTGGRLVVISFHSLEDRIVKRFIREGANTDKLPKHLPLRADEVRRFSRASLQMVGKAVRPGVAEVECNPRARSAVMRVAERINTT</sequence>
<evidence type="ECO:0000255" key="1">
    <source>
        <dbReference type="HAMAP-Rule" id="MF_01007"/>
    </source>
</evidence>
<feature type="chain" id="PRO_0000387010" description="Ribosomal RNA small subunit methyltransferase H">
    <location>
        <begin position="1"/>
        <end position="316"/>
    </location>
</feature>
<feature type="binding site" evidence="1">
    <location>
        <begin position="35"/>
        <end position="37"/>
    </location>
    <ligand>
        <name>S-adenosyl-L-methionine</name>
        <dbReference type="ChEBI" id="CHEBI:59789"/>
    </ligand>
</feature>
<feature type="binding site" evidence="1">
    <location>
        <position position="55"/>
    </location>
    <ligand>
        <name>S-adenosyl-L-methionine</name>
        <dbReference type="ChEBI" id="CHEBI:59789"/>
    </ligand>
</feature>
<feature type="binding site" evidence="1">
    <location>
        <position position="79"/>
    </location>
    <ligand>
        <name>S-adenosyl-L-methionine</name>
        <dbReference type="ChEBI" id="CHEBI:59789"/>
    </ligand>
</feature>
<feature type="binding site" evidence="1">
    <location>
        <position position="100"/>
    </location>
    <ligand>
        <name>S-adenosyl-L-methionine</name>
        <dbReference type="ChEBI" id="CHEBI:59789"/>
    </ligand>
</feature>
<feature type="binding site" evidence="1">
    <location>
        <position position="107"/>
    </location>
    <ligand>
        <name>S-adenosyl-L-methionine</name>
        <dbReference type="ChEBI" id="CHEBI:59789"/>
    </ligand>
</feature>
<keyword id="KW-0963">Cytoplasm</keyword>
<keyword id="KW-0489">Methyltransferase</keyword>
<keyword id="KW-1185">Reference proteome</keyword>
<keyword id="KW-0698">rRNA processing</keyword>
<keyword id="KW-0949">S-adenosyl-L-methionine</keyword>
<keyword id="KW-0808">Transferase</keyword>
<dbReference type="EC" id="2.1.1.199" evidence="1"/>
<dbReference type="EMBL" id="CP000103">
    <property type="protein sequence ID" value="ABB75791.1"/>
    <property type="molecule type" value="Genomic_DNA"/>
</dbReference>
<dbReference type="RefSeq" id="WP_011381790.1">
    <property type="nucleotide sequence ID" value="NC_007614.1"/>
</dbReference>
<dbReference type="SMR" id="Q2Y630"/>
<dbReference type="STRING" id="323848.Nmul_A2502"/>
<dbReference type="KEGG" id="nmu:Nmul_A2502"/>
<dbReference type="eggNOG" id="COG0275">
    <property type="taxonomic scope" value="Bacteria"/>
</dbReference>
<dbReference type="HOGENOM" id="CLU_038422_2_0_4"/>
<dbReference type="OrthoDB" id="9806637at2"/>
<dbReference type="Proteomes" id="UP000002718">
    <property type="component" value="Chromosome"/>
</dbReference>
<dbReference type="GO" id="GO:0005737">
    <property type="term" value="C:cytoplasm"/>
    <property type="evidence" value="ECO:0007669"/>
    <property type="project" value="UniProtKB-SubCell"/>
</dbReference>
<dbReference type="GO" id="GO:0071424">
    <property type="term" value="F:rRNA (cytosine-N4-)-methyltransferase activity"/>
    <property type="evidence" value="ECO:0007669"/>
    <property type="project" value="UniProtKB-UniRule"/>
</dbReference>
<dbReference type="GO" id="GO:0070475">
    <property type="term" value="P:rRNA base methylation"/>
    <property type="evidence" value="ECO:0007669"/>
    <property type="project" value="UniProtKB-UniRule"/>
</dbReference>
<dbReference type="FunFam" id="1.10.150.170:FF:000001">
    <property type="entry name" value="Ribosomal RNA small subunit methyltransferase H"/>
    <property type="match status" value="1"/>
</dbReference>
<dbReference type="Gene3D" id="1.10.150.170">
    <property type="entry name" value="Putative methyltransferase TM0872, insert domain"/>
    <property type="match status" value="1"/>
</dbReference>
<dbReference type="Gene3D" id="3.40.50.150">
    <property type="entry name" value="Vaccinia Virus protein VP39"/>
    <property type="match status" value="1"/>
</dbReference>
<dbReference type="HAMAP" id="MF_01007">
    <property type="entry name" value="16SrRNA_methyltr_H"/>
    <property type="match status" value="1"/>
</dbReference>
<dbReference type="InterPro" id="IPR002903">
    <property type="entry name" value="RsmH"/>
</dbReference>
<dbReference type="InterPro" id="IPR023397">
    <property type="entry name" value="SAM-dep_MeTrfase_MraW_recog"/>
</dbReference>
<dbReference type="InterPro" id="IPR029063">
    <property type="entry name" value="SAM-dependent_MTases_sf"/>
</dbReference>
<dbReference type="NCBIfam" id="TIGR00006">
    <property type="entry name" value="16S rRNA (cytosine(1402)-N(4))-methyltransferase RsmH"/>
    <property type="match status" value="1"/>
</dbReference>
<dbReference type="PANTHER" id="PTHR11265:SF0">
    <property type="entry name" value="12S RRNA N4-METHYLCYTIDINE METHYLTRANSFERASE"/>
    <property type="match status" value="1"/>
</dbReference>
<dbReference type="PANTHER" id="PTHR11265">
    <property type="entry name" value="S-ADENOSYL-METHYLTRANSFERASE MRAW"/>
    <property type="match status" value="1"/>
</dbReference>
<dbReference type="Pfam" id="PF01795">
    <property type="entry name" value="Methyltransf_5"/>
    <property type="match status" value="1"/>
</dbReference>
<dbReference type="PIRSF" id="PIRSF004486">
    <property type="entry name" value="MraW"/>
    <property type="match status" value="1"/>
</dbReference>
<dbReference type="SUPFAM" id="SSF81799">
    <property type="entry name" value="Putative methyltransferase TM0872, insert domain"/>
    <property type="match status" value="1"/>
</dbReference>
<dbReference type="SUPFAM" id="SSF53335">
    <property type="entry name" value="S-adenosyl-L-methionine-dependent methyltransferases"/>
    <property type="match status" value="1"/>
</dbReference>
<accession>Q2Y630</accession>
<gene>
    <name evidence="1" type="primary">rsmH</name>
    <name type="synonym">mraW</name>
    <name type="ordered locus">Nmul_A2502</name>
</gene>
<reference key="1">
    <citation type="submission" date="2005-08" db="EMBL/GenBank/DDBJ databases">
        <title>Complete sequence of chromosome 1 of Nitrosospira multiformis ATCC 25196.</title>
        <authorList>
            <person name="Copeland A."/>
            <person name="Lucas S."/>
            <person name="Lapidus A."/>
            <person name="Barry K."/>
            <person name="Detter J.C."/>
            <person name="Glavina T."/>
            <person name="Hammon N."/>
            <person name="Israni S."/>
            <person name="Pitluck S."/>
            <person name="Chain P."/>
            <person name="Malfatti S."/>
            <person name="Shin M."/>
            <person name="Vergez L."/>
            <person name="Schmutz J."/>
            <person name="Larimer F."/>
            <person name="Land M."/>
            <person name="Hauser L."/>
            <person name="Kyrpides N."/>
            <person name="Lykidis A."/>
            <person name="Richardson P."/>
        </authorList>
    </citation>
    <scope>NUCLEOTIDE SEQUENCE [LARGE SCALE GENOMIC DNA]</scope>
    <source>
        <strain>ATCC 25196 / NCIMB 11849 / C 71</strain>
    </source>
</reference>
<comment type="function">
    <text evidence="1">Specifically methylates the N4 position of cytidine in position 1402 (C1402) of 16S rRNA.</text>
</comment>
<comment type="catalytic activity">
    <reaction evidence="1">
        <text>cytidine(1402) in 16S rRNA + S-adenosyl-L-methionine = N(4)-methylcytidine(1402) in 16S rRNA + S-adenosyl-L-homocysteine + H(+)</text>
        <dbReference type="Rhea" id="RHEA:42928"/>
        <dbReference type="Rhea" id="RHEA-COMP:10286"/>
        <dbReference type="Rhea" id="RHEA-COMP:10287"/>
        <dbReference type="ChEBI" id="CHEBI:15378"/>
        <dbReference type="ChEBI" id="CHEBI:57856"/>
        <dbReference type="ChEBI" id="CHEBI:59789"/>
        <dbReference type="ChEBI" id="CHEBI:74506"/>
        <dbReference type="ChEBI" id="CHEBI:82748"/>
        <dbReference type="EC" id="2.1.1.199"/>
    </reaction>
</comment>
<comment type="subcellular location">
    <subcellularLocation>
        <location evidence="1">Cytoplasm</location>
    </subcellularLocation>
</comment>
<comment type="similarity">
    <text evidence="1">Belongs to the methyltransferase superfamily. RsmH family.</text>
</comment>
<organism>
    <name type="scientific">Nitrosospira multiformis (strain ATCC 25196 / NCIMB 11849 / C 71)</name>
    <dbReference type="NCBI Taxonomy" id="323848"/>
    <lineage>
        <taxon>Bacteria</taxon>
        <taxon>Pseudomonadati</taxon>
        <taxon>Pseudomonadota</taxon>
        <taxon>Betaproteobacteria</taxon>
        <taxon>Nitrosomonadales</taxon>
        <taxon>Nitrosomonadaceae</taxon>
        <taxon>Nitrosospira</taxon>
    </lineage>
</organism>
<proteinExistence type="inferred from homology"/>
<name>RSMH_NITMU</name>